<reference key="1">
    <citation type="journal article" date="2015" name="Nat. Genet.">
        <title>Convergent losses of decay mechanisms and rapid turnover of symbiosis genes in mycorrhizal mutualists.</title>
        <authorList>
            <consortium name="Mycorrhizal Genomics Initiative Consortium"/>
            <person name="Kohler A."/>
            <person name="Kuo A."/>
            <person name="Nagy L.G."/>
            <person name="Morin E."/>
            <person name="Barry K.W."/>
            <person name="Buscot F."/>
            <person name="Canbaeck B."/>
            <person name="Choi C."/>
            <person name="Cichocki N."/>
            <person name="Clum A."/>
            <person name="Colpaert J."/>
            <person name="Copeland A."/>
            <person name="Costa M.D."/>
            <person name="Dore J."/>
            <person name="Floudas D."/>
            <person name="Gay G."/>
            <person name="Girlanda M."/>
            <person name="Henrissat B."/>
            <person name="Herrmann S."/>
            <person name="Hess J."/>
            <person name="Hoegberg N."/>
            <person name="Johansson T."/>
            <person name="Khouja H.R."/>
            <person name="LaButti K."/>
            <person name="Lahrmann U."/>
            <person name="Levasseur A."/>
            <person name="Lindquist E.A."/>
            <person name="Lipzen A."/>
            <person name="Marmeisse R."/>
            <person name="Martino E."/>
            <person name="Murat C."/>
            <person name="Ngan C.Y."/>
            <person name="Nehls U."/>
            <person name="Plett J.M."/>
            <person name="Pringle A."/>
            <person name="Ohm R.A."/>
            <person name="Perotto S."/>
            <person name="Peter M."/>
            <person name="Riley R."/>
            <person name="Rineau F."/>
            <person name="Ruytinx J."/>
            <person name="Salamov A."/>
            <person name="Shah F."/>
            <person name="Sun H."/>
            <person name="Tarkka M."/>
            <person name="Tritt A."/>
            <person name="Veneault-Fourrey C."/>
            <person name="Zuccaro A."/>
            <person name="Tunlid A."/>
            <person name="Grigoriev I.V."/>
            <person name="Hibbett D.S."/>
            <person name="Martin F."/>
        </authorList>
    </citation>
    <scope>NUCLEOTIDE SEQUENCE [LARGE SCALE GENOMIC DNA]</scope>
    <source>
        <strain>Zn</strain>
    </source>
</reference>
<reference key="2">
    <citation type="journal article" date="2018" name="Front. Plant Sci.">
        <title>The Hydrophobin-Like OmSSP1 May Be an Effector in the Ericoid Mycorrhizal Symbiosis.</title>
        <authorList>
            <person name="Casarrubia S."/>
            <person name="Daghino S."/>
            <person name="Kohler A."/>
            <person name="Morin E."/>
            <person name="Khouja H.R."/>
            <person name="Daguerre Y."/>
            <person name="Veneault-Fourrey C."/>
            <person name="Martin F.M."/>
            <person name="Perotto S."/>
            <person name="Martino E."/>
        </authorList>
    </citation>
    <scope>INDUCTION</scope>
    <scope>FUNCTION</scope>
    <scope>SUBCELLULAR LOCATION</scope>
    <scope>DISRUPTION PHENOTYPE</scope>
</reference>
<keyword id="KW-0134">Cell wall</keyword>
<keyword id="KW-1015">Disulfide bond</keyword>
<keyword id="KW-1185">Reference proteome</keyword>
<keyword id="KW-0964">Secreted</keyword>
<keyword id="KW-0732">Signal</keyword>
<evidence type="ECO:0000250" key="1">
    <source>
        <dbReference type="UniProtKB" id="D8QCG9"/>
    </source>
</evidence>
<evidence type="ECO:0000250" key="2">
    <source>
        <dbReference type="UniProtKB" id="P16933"/>
    </source>
</evidence>
<evidence type="ECO:0000255" key="3"/>
<evidence type="ECO:0000269" key="4">
    <source>
    </source>
</evidence>
<evidence type="ECO:0000303" key="5">
    <source>
    </source>
</evidence>
<evidence type="ECO:0000305" key="6"/>
<accession>A0A0C3D4E3</accession>
<proteinExistence type="evidence at transcript level"/>
<sequence length="93" mass="9242">MKYITAISMLATAALTAATPLNGVEARWGSGGGGGGSTCDNNQQQVCCASVLSLICLVDVLGGNCNGGSYCCDNGASVGGLINLNLLNCVQIL</sequence>
<feature type="signal peptide" evidence="3">
    <location>
        <begin position="1"/>
        <end position="26"/>
    </location>
</feature>
<feature type="chain" id="PRO_5002173503" description="Class I hydrophobin SSP1">
    <location>
        <begin position="27"/>
        <end position="93"/>
    </location>
</feature>
<feature type="disulfide bond" evidence="1">
    <location>
        <begin position="39"/>
        <end position="71"/>
    </location>
</feature>
<feature type="disulfide bond" evidence="1">
    <location>
        <begin position="47"/>
        <end position="65"/>
    </location>
</feature>
<feature type="disulfide bond" evidence="1">
    <location>
        <begin position="48"/>
        <end position="56"/>
    </location>
</feature>
<feature type="disulfide bond" evidence="1">
    <location>
        <begin position="72"/>
        <end position="89"/>
    </location>
</feature>
<protein>
    <recommendedName>
        <fullName evidence="5">Class I hydrophobin SSP1</fullName>
    </recommendedName>
    <alternativeName>
        <fullName evidence="5">Small secreted protein 1</fullName>
    </alternativeName>
</protein>
<comment type="function">
    <text evidence="4 6">Aerial growth, conidiation, and dispersal of filamentous fungi in the environment rely upon a capability of their secreting small amphipathic proteins called hydrophobins (HPBs) with low sequence identity. Class I can self-assemble into an outermost layer of rodlet bundles on aerial cell surfaces, conferring cellular hydrophobicity that supports fungal growth, development and dispersal; whereas Class II form highly ordered films at water-air interfaces through intermolecular interactions but contribute nothing to the rodlet structure (Probable). SSP1 is a class I hydrophobin that acts as an effector in the ericoid mycorrhizal interaction with Vaccinium myrtillus (PubMed:29765384). May enhance attachment of the fungus to the root surface and protect the fungal hypha from plant defense compounds (PubMed:29765384).</text>
</comment>
<comment type="subunit">
    <text evidence="2">Self-assembles to form functional amyloid fibrils called rodlets. Self-assembly into fibrillar rodlets occurs spontaneously at hydrophobic:hydrophilic interfaces and the rodlets further associate laterally to form amphipathic monolayers.</text>
</comment>
<comment type="subcellular location">
    <subcellularLocation>
        <location evidence="4">Secreted</location>
    </subcellularLocation>
    <subcellularLocation>
        <location evidence="2">Secreted</location>
        <location evidence="2">Cell wall</location>
    </subcellularLocation>
</comment>
<comment type="induction">
    <text evidence="4">Expression is up-regulated during mycorrhizal symbiosis with Vaccinium myrtillus.</text>
</comment>
<comment type="disruption phenotype">
    <text evidence="4">Does not affect mycelium morphology, wettability nor growth under stressful conditions such as toxic heavy metals (Cd and Zn), oxidative stress (by H(2)O(2) and menadione) and plant-derived organic compounds displaying toxic/antimicrobical effects (caffeine, tannic acid, gallic acid, quercetin and caffeic acid) (PubMed:29765384). Leads to a reduced capability to colonize Vaccinium myrtillus roots (PubMed:29765384).</text>
</comment>
<comment type="similarity">
    <text evidence="6">Belongs to the fungal hydrophobin family.</text>
</comment>
<organism>
    <name type="scientific">Oidiodendron maius (strain Zn)</name>
    <dbReference type="NCBI Taxonomy" id="913774"/>
    <lineage>
        <taxon>Eukaryota</taxon>
        <taxon>Fungi</taxon>
        <taxon>Dikarya</taxon>
        <taxon>Ascomycota</taxon>
        <taxon>Pezizomycotina</taxon>
        <taxon>Leotiomycetes</taxon>
        <taxon>Leotiomycetes incertae sedis</taxon>
        <taxon>Myxotrichaceae</taxon>
        <taxon>Oidiodendron</taxon>
    </lineage>
</organism>
<dbReference type="EMBL" id="KN832883">
    <property type="protein sequence ID" value="KIM96792.1"/>
    <property type="molecule type" value="Genomic_DNA"/>
</dbReference>
<dbReference type="HOGENOM" id="CLU_168414_1_0_1"/>
<dbReference type="InParanoid" id="A0A0C3D4E3"/>
<dbReference type="OrthoDB" id="8115477at2759"/>
<dbReference type="Proteomes" id="UP000054321">
    <property type="component" value="Unassembled WGS sequence"/>
</dbReference>
<gene>
    <name evidence="5" type="primary">SSP1</name>
    <name type="ORF">OIDMADRAFT_182936</name>
</gene>
<name>SSP1_OIDMZ</name>